<accession>Q9SPG2</accession>
<accession>F4K3H4</accession>
<evidence type="ECO:0000255" key="1">
    <source>
        <dbReference type="PROSITE-ProRule" id="PRU00625"/>
    </source>
</evidence>
<evidence type="ECO:0000256" key="2">
    <source>
        <dbReference type="SAM" id="MobiDB-lite"/>
    </source>
</evidence>
<evidence type="ECO:0000269" key="3">
    <source>
    </source>
</evidence>
<evidence type="ECO:0000269" key="4">
    <source>
    </source>
</evidence>
<evidence type="ECO:0000269" key="5">
    <source>
    </source>
</evidence>
<evidence type="ECO:0000269" key="6">
    <source>
    </source>
</evidence>
<evidence type="ECO:0000269" key="7">
    <source>
    </source>
</evidence>
<evidence type="ECO:0000269" key="8">
    <source>
    </source>
</evidence>
<evidence type="ECO:0000269" key="9">
    <source>
    </source>
</evidence>
<evidence type="ECO:0000269" key="10">
    <source>
    </source>
</evidence>
<evidence type="ECO:0000269" key="11">
    <source>
    </source>
</evidence>
<evidence type="ECO:0000269" key="12">
    <source>
    </source>
</evidence>
<evidence type="ECO:0000305" key="13"/>
<comment type="function">
    <text evidence="4 5 6 7 8 10 11 12">Major regulator of short-chained aliphatic glucosinolates (GLSs) biosynthesis. Together with MYB29/HAG3 and MYB76/HAG2, promotes aliphatic glucosinolate biosynthesis but represses indolic glucosinolate biosynthesis. Prevents insect performance (e.g. lepidopteran insect Mamestra brassicae and Spodoptera exigua) by promoting glucosinolates.</text>
</comment>
<comment type="subunit">
    <text>Can form complexes with MYC2, MYC3 or MYC4.</text>
</comment>
<comment type="subcellular location">
    <subcellularLocation>
        <location evidence="1 5">Nucleus</location>
    </subcellularLocation>
</comment>
<comment type="alternative products">
    <event type="alternative splicing"/>
    <isoform>
        <id>Q9SPG2-1</id>
        <name>1</name>
        <sequence type="displayed"/>
    </isoform>
    <isoform>
        <id>Q9SPG2-2</id>
        <name>2</name>
        <sequence type="described" ref="VSP_042252"/>
    </isoform>
</comment>
<comment type="tissue specificity">
    <text evidence="5 9">Expressed in generative organs, mature leaves and trichomes.</text>
</comment>
<comment type="developmental stage">
    <text evidence="5">First present in stems, petioles and the main veins of true leaves in young seedlings. Later accumulates in leaves and present in lateral roots. During transition from the vegetative to the generative stage, preferentially expressed in inflorescence.</text>
</comment>
<comment type="induction">
    <text evidence="3 5 9 11">Slightly induced by glucose, gibberellic acid (GA), jasmonic acid (JA) and salicylic acid (SA). Transiently induced in inflorescence by mechanical stimuli such as touch or wounding, including herbivory-wounding. Up-regulated by sulfur-deficient stress.</text>
</comment>
<comment type="disruption phenotype">
    <text evidence="10">Low levels of aliphatic glucosinolates and decreased repressing effect of brassinosteroid on glucosinolates.</text>
</comment>
<proteinExistence type="evidence at protein level"/>
<reference key="1">
    <citation type="journal article" date="1998" name="DNA Res.">
        <title>Structural analysis of Arabidopsis thaliana chromosome 5. IV. Sequence features of the regions of 1,456,315 bp covered by nineteen physically assigned P1 and TAC clones.</title>
        <authorList>
            <person name="Sato S."/>
            <person name="Kaneko T."/>
            <person name="Kotani H."/>
            <person name="Nakamura Y."/>
            <person name="Asamizu E."/>
            <person name="Miyajima N."/>
            <person name="Tabata S."/>
        </authorList>
    </citation>
    <scope>NUCLEOTIDE SEQUENCE [LARGE SCALE GENOMIC DNA]</scope>
    <source>
        <strain>cv. Columbia</strain>
    </source>
</reference>
<reference key="2">
    <citation type="journal article" date="2017" name="Plant J.">
        <title>Araport11: a complete reannotation of the Arabidopsis thaliana reference genome.</title>
        <authorList>
            <person name="Cheng C.Y."/>
            <person name="Krishnakumar V."/>
            <person name="Chan A.P."/>
            <person name="Thibaud-Nissen F."/>
            <person name="Schobel S."/>
            <person name="Town C.D."/>
        </authorList>
    </citation>
    <scope>GENOME REANNOTATION</scope>
    <source>
        <strain>cv. Columbia</strain>
    </source>
</reference>
<reference key="3">
    <citation type="journal article" date="2001" name="Curr. Opin. Plant Biol.">
        <title>The R2R3-MYB gene family in Arabidopsis thaliana.</title>
        <authorList>
            <person name="Stracke R."/>
            <person name="Werber M."/>
            <person name="Weisshaar B."/>
        </authorList>
    </citation>
    <scope>NUCLEOTIDE SEQUENCE [LARGE SCALE MRNA] (ISOFORM 1)</scope>
    <scope>GENE FAMILY</scope>
    <scope>NOMENCLATURE</scope>
    <source>
        <strain>cv. Columbia</strain>
    </source>
</reference>
<reference key="4">
    <citation type="submission" date="2004-01" db="EMBL/GenBank/DDBJ databases">
        <title>The MYB transcription factor family in Arabidopsis: a genome-wide cloning and expression pattern analysis.</title>
        <authorList>
            <person name="Qu L.-J."/>
            <person name="Gu H."/>
        </authorList>
    </citation>
    <scope>NUCLEOTIDE SEQUENCE [LARGE SCALE MRNA] (ISOFORM 1)</scope>
</reference>
<reference key="5">
    <citation type="submission" date="2006-09" db="EMBL/GenBank/DDBJ databases">
        <title>Arabidopsis ORF Clones.</title>
        <authorList>
            <person name="Bautista V.R."/>
            <person name="Kim C.J."/>
            <person name="Chen H."/>
            <person name="Quinitio C."/>
            <person name="Ecker J.R."/>
        </authorList>
    </citation>
    <scope>NUCLEOTIDE SEQUENCE [LARGE SCALE MRNA] (ISOFORM 1)</scope>
    <source>
        <strain>cv. Columbia</strain>
    </source>
</reference>
<reference key="6">
    <citation type="journal article" date="2006" name="Plant Mol. Biol.">
        <title>The MYB transcription factor superfamily of Arabidopsis: expression analysis and phylogenetic comparison with the rice MYB family.</title>
        <authorList>
            <person name="Chen Y."/>
            <person name="Yang X."/>
            <person name="He K."/>
            <person name="Liu M."/>
            <person name="Li J."/>
            <person name="Gao Z."/>
            <person name="Lin Z."/>
            <person name="Zhang Y."/>
            <person name="Wang X."/>
            <person name="Qiu X."/>
            <person name="Shen Y."/>
            <person name="Zhang L."/>
            <person name="Deng X."/>
            <person name="Luo J."/>
            <person name="Deng X.-W."/>
            <person name="Chen Z."/>
            <person name="Gu H."/>
            <person name="Qu L.-J."/>
        </authorList>
    </citation>
    <scope>GENE FAMILY</scope>
    <scope>INDUCTION BY GA; JA AND SA</scope>
</reference>
<reference key="7">
    <citation type="journal article" date="2007" name="Plant J.">
        <title>The R2R3-MYB transcription factor HAG1/MYB28 is a regulator of methionine-derived glucosinolate biosynthesis in Arabidopsis thaliana.</title>
        <authorList>
            <person name="Gigolashvili T."/>
            <person name="Yatusevich R."/>
            <person name="Berger B."/>
            <person name="Mueller C."/>
            <person name="Fluegge U.-I."/>
        </authorList>
    </citation>
    <scope>FUNCTION</scope>
    <scope>TISSUE SPECIFICITY</scope>
    <scope>INDUCTION BY MECHANICAL STIMULI AND GLUCOSE</scope>
    <scope>SUBCELLULAR LOCATION</scope>
    <scope>DEVELOPMENTAL STAGE</scope>
</reference>
<reference key="8">
    <citation type="journal article" date="2007" name="Proc. Natl. Acad. Sci. U.S.A.">
        <title>Omics-based identification of Arabidopsis Myb transcription factors regulating aliphatic glucosinolate biosynthesis.</title>
        <authorList>
            <person name="Hirai M.Y."/>
            <person name="Sugiyama K."/>
            <person name="Sawada Y."/>
            <person name="Tohge T."/>
            <person name="Obayashi T."/>
            <person name="Suzuki A."/>
            <person name="Araki R."/>
            <person name="Sakurai N."/>
            <person name="Suzuki H."/>
            <person name="Aoki K."/>
            <person name="Goda H."/>
            <person name="Nishizawa O.I."/>
            <person name="Shibata D."/>
            <person name="Saito K."/>
        </authorList>
    </citation>
    <scope>FUNCTION IN GLUCOSINOLATES BIOSYNTHESIS</scope>
</reference>
<reference key="9">
    <citation type="journal article" date="2008" name="New Phytol.">
        <title>HAG2/MYB76 and HAG3/MYB29 exert a specific and coordinated control on the regulation of aliphatic glucosinolate biosynthesis in Arabidopsis thaliana.</title>
        <authorList>
            <person name="Gigolashvili T."/>
            <person name="Engqvist M."/>
            <person name="Yatusevich R."/>
            <person name="Mueller C."/>
            <person name="Fluegge U.I."/>
        </authorList>
    </citation>
    <scope>FUNCTION IN GLUCOSINOLATES BIOSYNTHESIS</scope>
</reference>
<reference key="10">
    <citation type="journal article" date="2008" name="PLoS ONE">
        <title>The impact of the absence of aliphatic glucosinolates on insect herbivory in Arabidopsis.</title>
        <authorList>
            <person name="Beekwilder J."/>
            <person name="van Leeuwen W."/>
            <person name="van Dam N.M."/>
            <person name="Bertossi M."/>
            <person name="Grandi V."/>
            <person name="Mizzi L."/>
            <person name="Soloviev M."/>
            <person name="Szabados L."/>
            <person name="Molthoff J.W."/>
            <person name="Schipper B."/>
            <person name="Verbocht H."/>
            <person name="de Vos R.C.H."/>
            <person name="Morandini P."/>
            <person name="Aarts M.G.M."/>
            <person name="Bovy A."/>
        </authorList>
    </citation>
    <scope>FUNCTION IN GLUCOSINOLATES BIOSYNTHESIS</scope>
    <source>
        <strain>cv. Columbia</strain>
    </source>
</reference>
<reference key="11">
    <citation type="journal article" date="2010" name="Plant Physiol.">
        <title>A complex interplay of three R2R3 MYB transcription factors determines the profile of aliphatic glucosinolates in Arabidopsis.</title>
        <authorList>
            <person name="Soenderby I.E."/>
            <person name="Burow M."/>
            <person name="Rowe H.C."/>
            <person name="Kliebenstein D.J."/>
            <person name="Halkier B.A."/>
        </authorList>
    </citation>
    <scope>FUNCTION</scope>
    <source>
        <strain>cv. Columbia</strain>
    </source>
</reference>
<reference key="12">
    <citation type="journal article" date="2012" name="Front. Plant Sci.">
        <title>Glucosinolates are produced in trichomes of Arabidopsis thaliana.</title>
        <authorList>
            <person name="Frerigmann H."/>
            <person name="Boettcher C."/>
            <person name="Baatout D."/>
            <person name="Gigolashvili T."/>
        </authorList>
    </citation>
    <scope>TISSUE SPECIFICITY</scope>
    <scope>INDUCTION BY WOUNDING</scope>
    <source>
        <strain>cv. Columbia</strain>
    </source>
</reference>
<reference key="13">
    <citation type="journal article" date="2013" name="J. Exp. Bot.">
        <title>BZR1 and BES1 participate in regulation of glucosinolate biosynthesis by brassinosteroids in Arabidopsis.</title>
        <authorList>
            <person name="Guo R."/>
            <person name="Qian H."/>
            <person name="Shen W."/>
            <person name="Liu L."/>
            <person name="Zhang M."/>
            <person name="Cai C."/>
            <person name="Zhao Y."/>
            <person name="Qiao J."/>
            <person name="Wang Q."/>
        </authorList>
    </citation>
    <scope>FUNCTION</scope>
    <scope>DISRUPTION PHENOTYPE</scope>
</reference>
<reference key="14">
    <citation type="journal article" date="2013" name="Plant Cell Physiol.">
        <title>Novel insights into the function of Arabidopsis R2R3-MYB transcription factors regulating aliphatic glucosinolate biosynthesis.</title>
        <authorList>
            <person name="Li Y."/>
            <person name="Sawada Y."/>
            <person name="Hirai A."/>
            <person name="Sato M."/>
            <person name="Kuwahara A."/>
            <person name="Yan X."/>
            <person name="Hirai M.Y."/>
        </authorList>
    </citation>
    <scope>FUNCTION</scope>
    <scope>INDUCTION BY SULFUR</scope>
</reference>
<reference key="15">
    <citation type="journal article" date="2013" name="Plant Cell">
        <title>Arabidopsis basic helix-loop-helix transcription factors MYC2, MYC3, and MYC4 regulate glucosinolate biosynthesis, insect performance, and feeding behavior.</title>
        <authorList>
            <person name="Schweizer F."/>
            <person name="Fernandez-Calvo P."/>
            <person name="Zander M."/>
            <person name="Diez-Diaz M."/>
            <person name="Fonseca S."/>
            <person name="Glauser G."/>
            <person name="Lewsey M.G."/>
            <person name="Ecker J.R."/>
            <person name="Solano R."/>
            <person name="Reymond P."/>
        </authorList>
    </citation>
    <scope>FUNCTION</scope>
    <scope>INTERACTION WITH MYC2; MYC3 AND MYC4</scope>
</reference>
<sequence length="366" mass="41134">MSRKPCCVGEGLKKGAWTTEEDKKLISYIHDHGEGGWRDIPQKAGLKRCGKSCRLRWTNYLKPEIKRGEFSSEEEQIIIMLHASRGNKWSVIARHLPRRTDNEIKNYWNTHLKKRLMEQGIDPVTHKPLASSSNPTVDENLNSPNASSSDKQYSRSSSMPFLSRPPPSSCNMVSKVSELSSNDGTPIQGSSLSCKKRFKKSSSTSRLLNKVAAKATSIKDILSASMEGSLSATTISHASFFNGFTEQIRNEEDSSNTSLTNTLAEFDPFSPSSLYPEHEINATSDLNMDQDYDFSQFFEKFGGDNHNEENSMNDLLMSDVSQEVSSTSVDDQDNMVGNFEGWSNYLLDHTNFMYDTDSDSLEKHFI</sequence>
<name>MYB28_ARATH</name>
<protein>
    <recommendedName>
        <fullName>Transcription factor MYB28</fullName>
    </recommendedName>
    <alternativeName>
        <fullName>Myb-related protein 28</fullName>
        <shortName>AtMYB28</shortName>
    </alternativeName>
    <alternativeName>
        <fullName>Protein HIGH ALIPHATIC GLUCOSINOLATE 1</fullName>
    </alternativeName>
    <alternativeName>
        <fullName>Protein PRODUCTION OF METHIONINE-DERIVED GLUCOSINOLATE 1</fullName>
    </alternativeName>
</protein>
<keyword id="KW-0025">Alternative splicing</keyword>
<keyword id="KW-0238">DNA-binding</keyword>
<keyword id="KW-0539">Nucleus</keyword>
<keyword id="KW-1185">Reference proteome</keyword>
<keyword id="KW-0677">Repeat</keyword>
<keyword id="KW-0804">Transcription</keyword>
<keyword id="KW-0805">Transcription regulation</keyword>
<dbReference type="EMBL" id="AB010073">
    <property type="protein sequence ID" value="BAB08498.1"/>
    <property type="molecule type" value="Genomic_DNA"/>
</dbReference>
<dbReference type="EMBL" id="CP002688">
    <property type="protein sequence ID" value="AED97466.1"/>
    <property type="molecule type" value="Genomic_DNA"/>
</dbReference>
<dbReference type="EMBL" id="CP002688">
    <property type="protein sequence ID" value="AED97467.1"/>
    <property type="molecule type" value="Genomic_DNA"/>
</dbReference>
<dbReference type="EMBL" id="AF175998">
    <property type="protein sequence ID" value="AAD53103.1"/>
    <property type="molecule type" value="mRNA"/>
</dbReference>
<dbReference type="EMBL" id="AY519643">
    <property type="protein sequence ID" value="AAS10113.1"/>
    <property type="molecule type" value="mRNA"/>
</dbReference>
<dbReference type="EMBL" id="BT028959">
    <property type="protein sequence ID" value="ABI54334.1"/>
    <property type="molecule type" value="mRNA"/>
</dbReference>
<dbReference type="RefSeq" id="NP_200950.1">
    <molecule id="Q9SPG2-1"/>
    <property type="nucleotide sequence ID" value="NM_125535.4"/>
</dbReference>
<dbReference type="RefSeq" id="NP_851241.1">
    <molecule id="Q9SPG2-2"/>
    <property type="nucleotide sequence ID" value="NM_180910.2"/>
</dbReference>
<dbReference type="SMR" id="Q9SPG2"/>
<dbReference type="BioGRID" id="21507">
    <property type="interactions" value="8"/>
</dbReference>
<dbReference type="FunCoup" id="Q9SPG2">
    <property type="interactions" value="1"/>
</dbReference>
<dbReference type="IntAct" id="Q9SPG2">
    <property type="interactions" value="4"/>
</dbReference>
<dbReference type="STRING" id="3702.Q9SPG2"/>
<dbReference type="PaxDb" id="3702-AT5G61420.2"/>
<dbReference type="ProteomicsDB" id="251330">
    <molecule id="Q9SPG2-1"/>
</dbReference>
<dbReference type="EnsemblPlants" id="AT5G61420.1">
    <molecule id="Q9SPG2-2"/>
    <property type="protein sequence ID" value="AT5G61420.1"/>
    <property type="gene ID" value="AT5G61420"/>
</dbReference>
<dbReference type="EnsemblPlants" id="AT5G61420.2">
    <molecule id="Q9SPG2-1"/>
    <property type="protein sequence ID" value="AT5G61420.2"/>
    <property type="gene ID" value="AT5G61420"/>
</dbReference>
<dbReference type="GeneID" id="836263"/>
<dbReference type="Gramene" id="AT5G61420.1">
    <molecule id="Q9SPG2-2"/>
    <property type="protein sequence ID" value="AT5G61420.1"/>
    <property type="gene ID" value="AT5G61420"/>
</dbReference>
<dbReference type="Gramene" id="AT5G61420.2">
    <molecule id="Q9SPG2-1"/>
    <property type="protein sequence ID" value="AT5G61420.2"/>
    <property type="gene ID" value="AT5G61420"/>
</dbReference>
<dbReference type="KEGG" id="ath:AT5G61420"/>
<dbReference type="Araport" id="AT5G61420"/>
<dbReference type="TAIR" id="AT5G61420">
    <property type="gene designation" value="MYB28"/>
</dbReference>
<dbReference type="eggNOG" id="KOG0048">
    <property type="taxonomic scope" value="Eukaryota"/>
</dbReference>
<dbReference type="HOGENOM" id="CLU_028567_0_1_1"/>
<dbReference type="InParanoid" id="Q9SPG2"/>
<dbReference type="OMA" id="NVEYSHD"/>
<dbReference type="OrthoDB" id="2143914at2759"/>
<dbReference type="PhylomeDB" id="Q9SPG2"/>
<dbReference type="PRO" id="PR:Q9SPG2"/>
<dbReference type="Proteomes" id="UP000006548">
    <property type="component" value="Chromosome 5"/>
</dbReference>
<dbReference type="ExpressionAtlas" id="Q9SPG2">
    <property type="expression patterns" value="baseline and differential"/>
</dbReference>
<dbReference type="GO" id="GO:0005634">
    <property type="term" value="C:nucleus"/>
    <property type="evidence" value="ECO:0000314"/>
    <property type="project" value="TAIR"/>
</dbReference>
<dbReference type="GO" id="GO:0003700">
    <property type="term" value="F:DNA-binding transcription factor activity"/>
    <property type="evidence" value="ECO:0000250"/>
    <property type="project" value="TAIR"/>
</dbReference>
<dbReference type="GO" id="GO:0000976">
    <property type="term" value="F:transcription cis-regulatory region binding"/>
    <property type="evidence" value="ECO:0000353"/>
    <property type="project" value="TAIR"/>
</dbReference>
<dbReference type="GO" id="GO:0010438">
    <property type="term" value="P:cellular response to sulfur starvation"/>
    <property type="evidence" value="ECO:0000304"/>
    <property type="project" value="TAIR"/>
</dbReference>
<dbReference type="GO" id="GO:0050832">
    <property type="term" value="P:defense response to fungus"/>
    <property type="evidence" value="ECO:0000315"/>
    <property type="project" value="TAIR"/>
</dbReference>
<dbReference type="GO" id="GO:0009682">
    <property type="term" value="P:induced systemic resistance"/>
    <property type="evidence" value="ECO:0000315"/>
    <property type="project" value="TAIR"/>
</dbReference>
<dbReference type="GO" id="GO:0006355">
    <property type="term" value="P:regulation of DNA-templated transcription"/>
    <property type="evidence" value="ECO:0000270"/>
    <property type="project" value="TAIR"/>
</dbReference>
<dbReference type="GO" id="GO:0010439">
    <property type="term" value="P:regulation of glucosinolate biosynthetic process"/>
    <property type="evidence" value="ECO:0000315"/>
    <property type="project" value="TAIR"/>
</dbReference>
<dbReference type="GO" id="GO:0009617">
    <property type="term" value="P:response to bacterium"/>
    <property type="evidence" value="ECO:0000315"/>
    <property type="project" value="TAIR"/>
</dbReference>
<dbReference type="GO" id="GO:0009625">
    <property type="term" value="P:response to insect"/>
    <property type="evidence" value="ECO:0000270"/>
    <property type="project" value="TAIR"/>
</dbReference>
<dbReference type="CDD" id="cd00167">
    <property type="entry name" value="SANT"/>
    <property type="match status" value="2"/>
</dbReference>
<dbReference type="FunFam" id="1.10.10.60:FF:000394">
    <property type="entry name" value="MYB transcription factor"/>
    <property type="match status" value="1"/>
</dbReference>
<dbReference type="FunFam" id="1.10.10.60:FF:000001">
    <property type="entry name" value="MYB-related transcription factor"/>
    <property type="match status" value="1"/>
</dbReference>
<dbReference type="Gene3D" id="1.10.10.60">
    <property type="entry name" value="Homeodomain-like"/>
    <property type="match status" value="2"/>
</dbReference>
<dbReference type="InterPro" id="IPR009057">
    <property type="entry name" value="Homeodomain-like_sf"/>
</dbReference>
<dbReference type="InterPro" id="IPR017930">
    <property type="entry name" value="Myb_dom"/>
</dbReference>
<dbReference type="InterPro" id="IPR015495">
    <property type="entry name" value="Myb_TF_plants"/>
</dbReference>
<dbReference type="InterPro" id="IPR001005">
    <property type="entry name" value="SANT/Myb"/>
</dbReference>
<dbReference type="PANTHER" id="PTHR47994">
    <property type="entry name" value="F14D16.11-RELATED"/>
    <property type="match status" value="1"/>
</dbReference>
<dbReference type="PANTHER" id="PTHR47994:SF5">
    <property type="entry name" value="F14D16.11-RELATED"/>
    <property type="match status" value="1"/>
</dbReference>
<dbReference type="Pfam" id="PF00249">
    <property type="entry name" value="Myb_DNA-binding"/>
    <property type="match status" value="2"/>
</dbReference>
<dbReference type="SMART" id="SM00717">
    <property type="entry name" value="SANT"/>
    <property type="match status" value="2"/>
</dbReference>
<dbReference type="SUPFAM" id="SSF46689">
    <property type="entry name" value="Homeodomain-like"/>
    <property type="match status" value="1"/>
</dbReference>
<dbReference type="PROSITE" id="PS51294">
    <property type="entry name" value="HTH_MYB"/>
    <property type="match status" value="2"/>
</dbReference>
<gene>
    <name type="primary">MYB28</name>
    <name type="synonym">HAG1</name>
    <name type="synonym">PMG1</name>
    <name type="ordered locus">At5g61420</name>
    <name type="ORF">MFB13.22</name>
</gene>
<feature type="chain" id="PRO_0000415436" description="Transcription factor MYB28">
    <location>
        <begin position="1"/>
        <end position="366"/>
    </location>
</feature>
<feature type="domain" description="HTH myb-type 1" evidence="1">
    <location>
        <begin position="9"/>
        <end position="61"/>
    </location>
</feature>
<feature type="domain" description="HTH myb-type 2" evidence="1">
    <location>
        <begin position="62"/>
        <end position="116"/>
    </location>
</feature>
<feature type="DNA-binding region" description="H-T-H motif" evidence="1">
    <location>
        <begin position="37"/>
        <end position="61"/>
    </location>
</feature>
<feature type="DNA-binding region" description="H-T-H motif" evidence="1">
    <location>
        <begin position="89"/>
        <end position="112"/>
    </location>
</feature>
<feature type="region of interest" description="Disordered" evidence="2">
    <location>
        <begin position="124"/>
        <end position="170"/>
    </location>
</feature>
<feature type="compositionally biased region" description="Polar residues" evidence="2">
    <location>
        <begin position="130"/>
        <end position="146"/>
    </location>
</feature>
<feature type="compositionally biased region" description="Low complexity" evidence="2">
    <location>
        <begin position="147"/>
        <end position="158"/>
    </location>
</feature>
<feature type="splice variant" id="VSP_042252" description="In isoform 2." evidence="13">
    <location>
        <begin position="1"/>
        <end position="79"/>
    </location>
</feature>
<organism>
    <name type="scientific">Arabidopsis thaliana</name>
    <name type="common">Mouse-ear cress</name>
    <dbReference type="NCBI Taxonomy" id="3702"/>
    <lineage>
        <taxon>Eukaryota</taxon>
        <taxon>Viridiplantae</taxon>
        <taxon>Streptophyta</taxon>
        <taxon>Embryophyta</taxon>
        <taxon>Tracheophyta</taxon>
        <taxon>Spermatophyta</taxon>
        <taxon>Magnoliopsida</taxon>
        <taxon>eudicotyledons</taxon>
        <taxon>Gunneridae</taxon>
        <taxon>Pentapetalae</taxon>
        <taxon>rosids</taxon>
        <taxon>malvids</taxon>
        <taxon>Brassicales</taxon>
        <taxon>Brassicaceae</taxon>
        <taxon>Camelineae</taxon>
        <taxon>Arabidopsis</taxon>
    </lineage>
</organism>